<evidence type="ECO:0000250" key="1"/>
<evidence type="ECO:0000255" key="2"/>
<evidence type="ECO:0000255" key="3">
    <source>
        <dbReference type="PROSITE-ProRule" id="PRU00067"/>
    </source>
</evidence>
<evidence type="ECO:0000305" key="4"/>
<keyword id="KW-0012">Acyltransferase</keyword>
<keyword id="KW-0040">ANK repeat</keyword>
<keyword id="KW-0967">Endosome</keyword>
<keyword id="KW-0333">Golgi apparatus</keyword>
<keyword id="KW-0449">Lipoprotein</keyword>
<keyword id="KW-0472">Membrane</keyword>
<keyword id="KW-0564">Palmitate</keyword>
<keyword id="KW-1185">Reference proteome</keyword>
<keyword id="KW-0677">Repeat</keyword>
<keyword id="KW-0808">Transferase</keyword>
<keyword id="KW-0812">Transmembrane</keyword>
<keyword id="KW-1133">Transmembrane helix</keyword>
<organism>
    <name type="scientific">Schizosaccharomyces pombe (strain 972 / ATCC 24843)</name>
    <name type="common">Fission yeast</name>
    <dbReference type="NCBI Taxonomy" id="284812"/>
    <lineage>
        <taxon>Eukaryota</taxon>
        <taxon>Fungi</taxon>
        <taxon>Dikarya</taxon>
        <taxon>Ascomycota</taxon>
        <taxon>Taphrinomycotina</taxon>
        <taxon>Schizosaccharomycetes</taxon>
        <taxon>Schizosaccharomycetales</taxon>
        <taxon>Schizosaccharomycetaceae</taxon>
        <taxon>Schizosaccharomyces</taxon>
    </lineage>
</organism>
<feature type="chain" id="PRO_0000212931" description="Palmitoyltransferase akr1">
    <location>
        <begin position="1"/>
        <end position="642"/>
    </location>
</feature>
<feature type="topological domain" description="Cytoplasmic" evidence="2">
    <location>
        <begin position="1"/>
        <end position="256"/>
    </location>
</feature>
<feature type="transmembrane region" description="Helical" evidence="2">
    <location>
        <begin position="257"/>
        <end position="277"/>
    </location>
</feature>
<feature type="transmembrane region" description="Helical" evidence="2">
    <location>
        <begin position="278"/>
        <end position="298"/>
    </location>
</feature>
<feature type="topological domain" description="Cytoplasmic" evidence="2">
    <location>
        <begin position="299"/>
        <end position="316"/>
    </location>
</feature>
<feature type="transmembrane region" description="Helical" evidence="2">
    <location>
        <begin position="317"/>
        <end position="337"/>
    </location>
</feature>
<feature type="topological domain" description="Lumenal" evidence="2">
    <location>
        <begin position="338"/>
        <end position="343"/>
    </location>
</feature>
<feature type="transmembrane region" description="Helical" evidence="2">
    <location>
        <begin position="344"/>
        <end position="364"/>
    </location>
</feature>
<feature type="topological domain" description="Cytoplasmic" evidence="2">
    <location>
        <begin position="365"/>
        <end position="444"/>
    </location>
</feature>
<feature type="transmembrane region" description="Helical" evidence="2">
    <location>
        <begin position="445"/>
        <end position="465"/>
    </location>
</feature>
<feature type="topological domain" description="Lumenal" evidence="2">
    <location>
        <begin position="466"/>
        <end position="496"/>
    </location>
</feature>
<feature type="transmembrane region" description="Helical" evidence="2">
    <location>
        <begin position="497"/>
        <end position="517"/>
    </location>
</feature>
<feature type="topological domain" description="Cytoplasmic" evidence="2">
    <location>
        <begin position="518"/>
        <end position="642"/>
    </location>
</feature>
<feature type="repeat" description="ANK 1">
    <location>
        <begin position="1"/>
        <end position="29"/>
    </location>
</feature>
<feature type="repeat" description="ANK 2">
    <location>
        <begin position="33"/>
        <end position="62"/>
    </location>
</feature>
<feature type="repeat" description="ANK 3">
    <location>
        <begin position="67"/>
        <end position="96"/>
    </location>
</feature>
<feature type="repeat" description="ANK 4">
    <location>
        <begin position="100"/>
        <end position="129"/>
    </location>
</feature>
<feature type="repeat" description="ANK 5">
    <location>
        <begin position="133"/>
        <end position="162"/>
    </location>
</feature>
<feature type="repeat" description="ANK 6">
    <location>
        <begin position="166"/>
        <end position="196"/>
    </location>
</feature>
<feature type="domain" description="DHHC" evidence="3">
    <location>
        <begin position="400"/>
        <end position="450"/>
    </location>
</feature>
<feature type="active site" description="S-palmitoyl cysteine intermediate" evidence="1">
    <location>
        <position position="430"/>
    </location>
</feature>
<name>AKR1_SCHPO</name>
<protein>
    <recommendedName>
        <fullName>Palmitoyltransferase akr1</fullName>
        <ecNumber>2.3.1.225</ecNumber>
    </recommendedName>
    <alternativeName>
        <fullName>Ankyrin repeat-containing protein akr1</fullName>
    </alternativeName>
</protein>
<sequence>MGSLFLAASQGELDTVKNLISSEKIDVNATDEGGATALHWAALNQQIPICKFLLEHGADVNAIGGDLQAAPIHWAAKRGSVKTVHYLVQHGADPLLKDKQGFNCLHLAVHAASPLLVVYLLHLDISVDLRDDQQHTPLMWASYHGNEPITNCLLRWGADVLATDEDKMTPLHWSIVGGNLKCMKLILKEGGIPCTAVTANLSGQLKTPWALASELRVSHLFKQALISNGLKVKETSEEPEKWVVVPSKFQFSQKTFIIFCFLSSFIITGVFFFIMSICPMVISLIIAPLWIYFTFKYITTCIHANIDIVHFYLETPFLAGIFSSIFFWVWCHSLLYIVPKTLPIKPLSSLLFVLISFTCIGLYVRTAFQNPGYVDKIGAVVQRREEISKLLDKDLFNQSHYCLKCFQVKPPRSYHCGACKRCINRYDHHCPWTGNCVGARNHRTFLLFVFTLSTLIPIYFYVAFYYLQNIPIQKKYESYRCLFISGTICQWSLKDMFVLVASLTLFVNWCWVVVLAFTQICQVAHNVTTAEFRLFKRYGTLVPPTKQNSSPKNGHGIHGSFLRTVCGILGLDQCILLIRESNCFVRCFPSRAELGSQNSTSLSRNLSTVNPYDEGSIIKNCKTFWKQNFLNDGRQDEATRHV</sequence>
<proteinExistence type="inferred from homology"/>
<gene>
    <name type="primary">akr1</name>
    <name type="ORF">SPAC2F7.10</name>
</gene>
<comment type="function">
    <text evidence="1">Palmitoyltransferase specific for casein kinase 1.</text>
</comment>
<comment type="catalytic activity">
    <reaction>
        <text>L-cysteinyl-[protein] + hexadecanoyl-CoA = S-hexadecanoyl-L-cysteinyl-[protein] + CoA</text>
        <dbReference type="Rhea" id="RHEA:36683"/>
        <dbReference type="Rhea" id="RHEA-COMP:10131"/>
        <dbReference type="Rhea" id="RHEA-COMP:11032"/>
        <dbReference type="ChEBI" id="CHEBI:29950"/>
        <dbReference type="ChEBI" id="CHEBI:57287"/>
        <dbReference type="ChEBI" id="CHEBI:57379"/>
        <dbReference type="ChEBI" id="CHEBI:74151"/>
        <dbReference type="EC" id="2.3.1.225"/>
    </reaction>
</comment>
<comment type="subcellular location">
    <subcellularLocation>
        <location>Early endosome membrane</location>
        <topology>Multi-pass membrane protein</topology>
    </subcellularLocation>
    <subcellularLocation>
        <location evidence="1">Golgi apparatus membrane</location>
        <topology evidence="1">Multi-pass membrane protein</topology>
    </subcellularLocation>
</comment>
<comment type="domain">
    <text evidence="1">The DHHC domain is required for palmitoyltransferase activity.</text>
</comment>
<comment type="similarity">
    <text evidence="4">Belongs to the DHHC palmitoyltransferase family. AKR/ZDHHC17 subfamily.</text>
</comment>
<accession>Q09701</accession>
<reference key="1">
    <citation type="journal article" date="2002" name="Nature">
        <title>The genome sequence of Schizosaccharomyces pombe.</title>
        <authorList>
            <person name="Wood V."/>
            <person name="Gwilliam R."/>
            <person name="Rajandream M.A."/>
            <person name="Lyne M.H."/>
            <person name="Lyne R."/>
            <person name="Stewart A."/>
            <person name="Sgouros J.G."/>
            <person name="Peat N."/>
            <person name="Hayles J."/>
            <person name="Baker S.G."/>
            <person name="Basham D."/>
            <person name="Bowman S."/>
            <person name="Brooks K."/>
            <person name="Brown D."/>
            <person name="Brown S."/>
            <person name="Chillingworth T."/>
            <person name="Churcher C.M."/>
            <person name="Collins M."/>
            <person name="Connor R."/>
            <person name="Cronin A."/>
            <person name="Davis P."/>
            <person name="Feltwell T."/>
            <person name="Fraser A."/>
            <person name="Gentles S."/>
            <person name="Goble A."/>
            <person name="Hamlin N."/>
            <person name="Harris D.E."/>
            <person name="Hidalgo J."/>
            <person name="Hodgson G."/>
            <person name="Holroyd S."/>
            <person name="Hornsby T."/>
            <person name="Howarth S."/>
            <person name="Huckle E.J."/>
            <person name="Hunt S."/>
            <person name="Jagels K."/>
            <person name="James K.D."/>
            <person name="Jones L."/>
            <person name="Jones M."/>
            <person name="Leather S."/>
            <person name="McDonald S."/>
            <person name="McLean J."/>
            <person name="Mooney P."/>
            <person name="Moule S."/>
            <person name="Mungall K.L."/>
            <person name="Murphy L.D."/>
            <person name="Niblett D."/>
            <person name="Odell C."/>
            <person name="Oliver K."/>
            <person name="O'Neil S."/>
            <person name="Pearson D."/>
            <person name="Quail M.A."/>
            <person name="Rabbinowitsch E."/>
            <person name="Rutherford K.M."/>
            <person name="Rutter S."/>
            <person name="Saunders D."/>
            <person name="Seeger K."/>
            <person name="Sharp S."/>
            <person name="Skelton J."/>
            <person name="Simmonds M.N."/>
            <person name="Squares R."/>
            <person name="Squares S."/>
            <person name="Stevens K."/>
            <person name="Taylor K."/>
            <person name="Taylor R.G."/>
            <person name="Tivey A."/>
            <person name="Walsh S.V."/>
            <person name="Warren T."/>
            <person name="Whitehead S."/>
            <person name="Woodward J.R."/>
            <person name="Volckaert G."/>
            <person name="Aert R."/>
            <person name="Robben J."/>
            <person name="Grymonprez B."/>
            <person name="Weltjens I."/>
            <person name="Vanstreels E."/>
            <person name="Rieger M."/>
            <person name="Schaefer M."/>
            <person name="Mueller-Auer S."/>
            <person name="Gabel C."/>
            <person name="Fuchs M."/>
            <person name="Duesterhoeft A."/>
            <person name="Fritzc C."/>
            <person name="Holzer E."/>
            <person name="Moestl D."/>
            <person name="Hilbert H."/>
            <person name="Borzym K."/>
            <person name="Langer I."/>
            <person name="Beck A."/>
            <person name="Lehrach H."/>
            <person name="Reinhardt R."/>
            <person name="Pohl T.M."/>
            <person name="Eger P."/>
            <person name="Zimmermann W."/>
            <person name="Wedler H."/>
            <person name="Wambutt R."/>
            <person name="Purnelle B."/>
            <person name="Goffeau A."/>
            <person name="Cadieu E."/>
            <person name="Dreano S."/>
            <person name="Gloux S."/>
            <person name="Lelaure V."/>
            <person name="Mottier S."/>
            <person name="Galibert F."/>
            <person name="Aves S.J."/>
            <person name="Xiang Z."/>
            <person name="Hunt C."/>
            <person name="Moore K."/>
            <person name="Hurst S.M."/>
            <person name="Lucas M."/>
            <person name="Rochet M."/>
            <person name="Gaillardin C."/>
            <person name="Tallada V.A."/>
            <person name="Garzon A."/>
            <person name="Thode G."/>
            <person name="Daga R.R."/>
            <person name="Cruzado L."/>
            <person name="Jimenez J."/>
            <person name="Sanchez M."/>
            <person name="del Rey F."/>
            <person name="Benito J."/>
            <person name="Dominguez A."/>
            <person name="Revuelta J.L."/>
            <person name="Moreno S."/>
            <person name="Armstrong J."/>
            <person name="Forsburg S.L."/>
            <person name="Cerutti L."/>
            <person name="Lowe T."/>
            <person name="McCombie W.R."/>
            <person name="Paulsen I."/>
            <person name="Potashkin J."/>
            <person name="Shpakovski G.V."/>
            <person name="Ussery D."/>
            <person name="Barrell B.G."/>
            <person name="Nurse P."/>
        </authorList>
    </citation>
    <scope>NUCLEOTIDE SEQUENCE [LARGE SCALE GENOMIC DNA]</scope>
    <source>
        <strain>972 / ATCC 24843</strain>
    </source>
</reference>
<dbReference type="EC" id="2.3.1.225"/>
<dbReference type="EMBL" id="CU329670">
    <property type="protein sequence ID" value="CAA90497.1"/>
    <property type="molecule type" value="Genomic_DNA"/>
</dbReference>
<dbReference type="PIR" id="S58154">
    <property type="entry name" value="S58154"/>
</dbReference>
<dbReference type="RefSeq" id="NP_592981.1">
    <property type="nucleotide sequence ID" value="NM_001018381.2"/>
</dbReference>
<dbReference type="SMR" id="Q09701"/>
<dbReference type="BioGRID" id="278251">
    <property type="interactions" value="27"/>
</dbReference>
<dbReference type="FunCoup" id="Q09701">
    <property type="interactions" value="317"/>
</dbReference>
<dbReference type="STRING" id="284812.Q09701"/>
<dbReference type="iPTMnet" id="Q09701"/>
<dbReference type="PaxDb" id="4896-SPAC2F7.10.1"/>
<dbReference type="EnsemblFungi" id="SPAC2F7.10.1">
    <property type="protein sequence ID" value="SPAC2F7.10.1:pep"/>
    <property type="gene ID" value="SPAC2F7.10"/>
</dbReference>
<dbReference type="GeneID" id="2541757"/>
<dbReference type="KEGG" id="spo:2541757"/>
<dbReference type="PomBase" id="SPAC2F7.10">
    <property type="gene designation" value="akr1"/>
</dbReference>
<dbReference type="VEuPathDB" id="FungiDB:SPAC2F7.10"/>
<dbReference type="eggNOG" id="KOG0509">
    <property type="taxonomic scope" value="Eukaryota"/>
</dbReference>
<dbReference type="HOGENOM" id="CLU_012510_1_0_1"/>
<dbReference type="InParanoid" id="Q09701"/>
<dbReference type="OMA" id="RECQSHS"/>
<dbReference type="PhylomeDB" id="Q09701"/>
<dbReference type="PRO" id="PR:Q09701"/>
<dbReference type="Proteomes" id="UP000002485">
    <property type="component" value="Chromosome I"/>
</dbReference>
<dbReference type="GO" id="GO:0031901">
    <property type="term" value="C:early endosome membrane"/>
    <property type="evidence" value="ECO:0007669"/>
    <property type="project" value="UniProtKB-SubCell"/>
</dbReference>
<dbReference type="GO" id="GO:0005783">
    <property type="term" value="C:endoplasmic reticulum"/>
    <property type="evidence" value="ECO:0000314"/>
    <property type="project" value="PomBase"/>
</dbReference>
<dbReference type="GO" id="GO:0000329">
    <property type="term" value="C:fungal-type vacuole membrane"/>
    <property type="evidence" value="ECO:0007005"/>
    <property type="project" value="PomBase"/>
</dbReference>
<dbReference type="GO" id="GO:0005794">
    <property type="term" value="C:Golgi apparatus"/>
    <property type="evidence" value="ECO:0000314"/>
    <property type="project" value="PomBase"/>
</dbReference>
<dbReference type="GO" id="GO:0000139">
    <property type="term" value="C:Golgi membrane"/>
    <property type="evidence" value="ECO:0007669"/>
    <property type="project" value="UniProtKB-SubCell"/>
</dbReference>
<dbReference type="GO" id="GO:0019706">
    <property type="term" value="F:protein-cysteine S-palmitoyltransferase activity"/>
    <property type="evidence" value="ECO:0000315"/>
    <property type="project" value="PomBase"/>
</dbReference>
<dbReference type="GO" id="GO:0006612">
    <property type="term" value="P:protein targeting to membrane"/>
    <property type="evidence" value="ECO:0000315"/>
    <property type="project" value="PomBase"/>
</dbReference>
<dbReference type="Gene3D" id="1.25.40.20">
    <property type="entry name" value="Ankyrin repeat-containing domain"/>
    <property type="match status" value="1"/>
</dbReference>
<dbReference type="InterPro" id="IPR002110">
    <property type="entry name" value="Ankyrin_rpt"/>
</dbReference>
<dbReference type="InterPro" id="IPR036770">
    <property type="entry name" value="Ankyrin_rpt-contain_sf"/>
</dbReference>
<dbReference type="InterPro" id="IPR001594">
    <property type="entry name" value="Palmitoyltrfase_DHHC"/>
</dbReference>
<dbReference type="PANTHER" id="PTHR24161">
    <property type="entry name" value="ANK_REP_REGION DOMAIN-CONTAINING PROTEIN-RELATED"/>
    <property type="match status" value="1"/>
</dbReference>
<dbReference type="PANTHER" id="PTHR24161:SF85">
    <property type="entry name" value="PALMITOYLTRANSFERASE HIP14"/>
    <property type="match status" value="1"/>
</dbReference>
<dbReference type="Pfam" id="PF00023">
    <property type="entry name" value="Ank"/>
    <property type="match status" value="1"/>
</dbReference>
<dbReference type="Pfam" id="PF12796">
    <property type="entry name" value="Ank_2"/>
    <property type="match status" value="2"/>
</dbReference>
<dbReference type="Pfam" id="PF01529">
    <property type="entry name" value="DHHC"/>
    <property type="match status" value="1"/>
</dbReference>
<dbReference type="SMART" id="SM00248">
    <property type="entry name" value="ANK"/>
    <property type="match status" value="6"/>
</dbReference>
<dbReference type="SUPFAM" id="SSF48403">
    <property type="entry name" value="Ankyrin repeat"/>
    <property type="match status" value="1"/>
</dbReference>
<dbReference type="PROSITE" id="PS50297">
    <property type="entry name" value="ANK_REP_REGION"/>
    <property type="match status" value="1"/>
</dbReference>
<dbReference type="PROSITE" id="PS50088">
    <property type="entry name" value="ANK_REPEAT"/>
    <property type="match status" value="3"/>
</dbReference>
<dbReference type="PROSITE" id="PS50216">
    <property type="entry name" value="DHHC"/>
    <property type="match status" value="1"/>
</dbReference>